<accession>O25971</accession>
<keyword id="KW-0067">ATP-binding</keyword>
<keyword id="KW-0129">CBS domain</keyword>
<keyword id="KW-0547">Nucleotide-binding</keyword>
<keyword id="KW-1185">Reference proteome</keyword>
<keyword id="KW-0677">Repeat</keyword>
<gene>
    <name type="ordered locus">HP_1429</name>
</gene>
<comment type="similarity">
    <text evidence="4">Belongs to the SIS family. GutQ/KpsF subfamily.</text>
</comment>
<name>Y1429_HELPY</name>
<proteinExistence type="inferred from homology"/>
<evidence type="ECO:0000255" key="1"/>
<evidence type="ECO:0000255" key="2">
    <source>
        <dbReference type="PROSITE-ProRule" id="PRU00703"/>
    </source>
</evidence>
<evidence type="ECO:0000255" key="3">
    <source>
        <dbReference type="PROSITE-ProRule" id="PRU00797"/>
    </source>
</evidence>
<evidence type="ECO:0000305" key="4"/>
<dbReference type="EMBL" id="AE000511">
    <property type="protein sequence ID" value="AAD08468.1"/>
    <property type="molecule type" value="Genomic_DNA"/>
</dbReference>
<dbReference type="PIR" id="E64698">
    <property type="entry name" value="E64698"/>
</dbReference>
<dbReference type="RefSeq" id="NP_208220.1">
    <property type="nucleotide sequence ID" value="NC_000915.1"/>
</dbReference>
<dbReference type="RefSeq" id="WP_001121932.1">
    <property type="nucleotide sequence ID" value="NC_018939.1"/>
</dbReference>
<dbReference type="SMR" id="O25971"/>
<dbReference type="FunCoup" id="O25971">
    <property type="interactions" value="155"/>
</dbReference>
<dbReference type="STRING" id="85962.HP_1429"/>
<dbReference type="PaxDb" id="85962-C694_07390"/>
<dbReference type="EnsemblBacteria" id="AAD08468">
    <property type="protein sequence ID" value="AAD08468"/>
    <property type="gene ID" value="HP_1429"/>
</dbReference>
<dbReference type="KEGG" id="heo:C694_07390"/>
<dbReference type="KEGG" id="hpy:HP_1429"/>
<dbReference type="PATRIC" id="fig|85962.47.peg.1533"/>
<dbReference type="eggNOG" id="COG0517">
    <property type="taxonomic scope" value="Bacteria"/>
</dbReference>
<dbReference type="eggNOG" id="COG0794">
    <property type="taxonomic scope" value="Bacteria"/>
</dbReference>
<dbReference type="InParanoid" id="O25971"/>
<dbReference type="OrthoDB" id="9762536at2"/>
<dbReference type="PhylomeDB" id="O25971"/>
<dbReference type="Proteomes" id="UP000000429">
    <property type="component" value="Chromosome"/>
</dbReference>
<dbReference type="GO" id="GO:0005524">
    <property type="term" value="F:ATP binding"/>
    <property type="evidence" value="ECO:0007669"/>
    <property type="project" value="UniProtKB-KW"/>
</dbReference>
<dbReference type="GO" id="GO:0016853">
    <property type="term" value="F:isomerase activity"/>
    <property type="evidence" value="ECO:0007669"/>
    <property type="project" value="InterPro"/>
</dbReference>
<dbReference type="GO" id="GO:1901135">
    <property type="term" value="P:carbohydrate derivative metabolic process"/>
    <property type="evidence" value="ECO:0007669"/>
    <property type="project" value="InterPro"/>
</dbReference>
<dbReference type="GO" id="GO:0005975">
    <property type="term" value="P:carbohydrate metabolic process"/>
    <property type="evidence" value="ECO:0007669"/>
    <property type="project" value="InterPro"/>
</dbReference>
<dbReference type="CDD" id="cd05014">
    <property type="entry name" value="SIS_Kpsf"/>
    <property type="match status" value="1"/>
</dbReference>
<dbReference type="FunFam" id="3.40.50.10490:FF:000011">
    <property type="entry name" value="Arabinose 5-phosphate isomerase"/>
    <property type="match status" value="1"/>
</dbReference>
<dbReference type="Gene3D" id="3.10.580.10">
    <property type="entry name" value="CBS-domain"/>
    <property type="match status" value="1"/>
</dbReference>
<dbReference type="Gene3D" id="3.40.50.10490">
    <property type="entry name" value="Glucose-6-phosphate isomerase like protein, domain 1"/>
    <property type="match status" value="1"/>
</dbReference>
<dbReference type="InterPro" id="IPR000644">
    <property type="entry name" value="CBS_dom"/>
</dbReference>
<dbReference type="InterPro" id="IPR046342">
    <property type="entry name" value="CBS_dom_sf"/>
</dbReference>
<dbReference type="InterPro" id="IPR050986">
    <property type="entry name" value="GutQ/KpsF_isomerases"/>
</dbReference>
<dbReference type="InterPro" id="IPR004800">
    <property type="entry name" value="KdsD/KpsF-type"/>
</dbReference>
<dbReference type="InterPro" id="IPR001347">
    <property type="entry name" value="SIS_dom"/>
</dbReference>
<dbReference type="InterPro" id="IPR046348">
    <property type="entry name" value="SIS_dom_sf"/>
</dbReference>
<dbReference type="InterPro" id="IPR035474">
    <property type="entry name" value="SIS_Kpsf"/>
</dbReference>
<dbReference type="NCBIfam" id="TIGR00393">
    <property type="entry name" value="kpsF"/>
    <property type="match status" value="1"/>
</dbReference>
<dbReference type="PANTHER" id="PTHR42745">
    <property type="match status" value="1"/>
</dbReference>
<dbReference type="PANTHER" id="PTHR42745:SF1">
    <property type="entry name" value="ARABINOSE 5-PHOSPHATE ISOMERASE KDSD"/>
    <property type="match status" value="1"/>
</dbReference>
<dbReference type="Pfam" id="PF00571">
    <property type="entry name" value="CBS"/>
    <property type="match status" value="2"/>
</dbReference>
<dbReference type="Pfam" id="PF01380">
    <property type="entry name" value="SIS"/>
    <property type="match status" value="1"/>
</dbReference>
<dbReference type="PIRSF" id="PIRSF004692">
    <property type="entry name" value="KdsD_KpsF"/>
    <property type="match status" value="1"/>
</dbReference>
<dbReference type="SMART" id="SM00116">
    <property type="entry name" value="CBS"/>
    <property type="match status" value="1"/>
</dbReference>
<dbReference type="SUPFAM" id="SSF53697">
    <property type="entry name" value="SIS domain"/>
    <property type="match status" value="1"/>
</dbReference>
<dbReference type="PROSITE" id="PS51371">
    <property type="entry name" value="CBS"/>
    <property type="match status" value="2"/>
</dbReference>
<dbReference type="PROSITE" id="PS51464">
    <property type="entry name" value="SIS"/>
    <property type="match status" value="1"/>
</dbReference>
<organism>
    <name type="scientific">Helicobacter pylori (strain ATCC 700392 / 26695)</name>
    <name type="common">Campylobacter pylori</name>
    <dbReference type="NCBI Taxonomy" id="85962"/>
    <lineage>
        <taxon>Bacteria</taxon>
        <taxon>Pseudomonadati</taxon>
        <taxon>Campylobacterota</taxon>
        <taxon>Epsilonproteobacteria</taxon>
        <taxon>Campylobacterales</taxon>
        <taxon>Helicobacteraceae</taxon>
        <taxon>Helicobacter</taxon>
    </lineage>
</organism>
<feature type="chain" id="PRO_0000136587" description="Uncharacterized protein HP_1429">
    <location>
        <begin position="1"/>
        <end position="329"/>
    </location>
</feature>
<feature type="domain" description="SIS" evidence="3">
    <location>
        <begin position="38"/>
        <end position="184"/>
    </location>
</feature>
<feature type="domain" description="CBS 1" evidence="2">
    <location>
        <begin position="211"/>
        <end position="267"/>
    </location>
</feature>
<feature type="domain" description="CBS 2" evidence="2">
    <location>
        <begin position="270"/>
        <end position="329"/>
    </location>
</feature>
<feature type="binding site" evidence="1">
    <location>
        <begin position="56"/>
        <end position="61"/>
    </location>
    <ligand>
        <name>ATP</name>
        <dbReference type="ChEBI" id="CHEBI:30616"/>
    </ligand>
</feature>
<sequence length="329" mass="35784">MPILFDCNAIASQVLKDEASALLESVGQFQKPNDLEAIVKLILKSQENGGKLVIVGVGKSALVAQKIVASMLSTGNRSAFLHPTEAMHGDLGMVEKNDVVLMISYGGESLELLNLVSHLKRLSHKIITFTKSPNSSLSKLGDYYLSLKIQKEACPINTAPTTSTTLTLALGDVLMACLMRAKNFSQEDFASFHPGGLLGKKLFVKVKDLLQTTNLPLIAPSTSFKDALIEMSEKRLGSAILVNEANELVGVLSDGDVRRALLKGVSLKSEVRHFATLKPKSFKNLDALLLEALEFLERHKIQLLVCVDDHNKVLGVLHLHQLLELGLKA</sequence>
<protein>
    <recommendedName>
        <fullName>Uncharacterized protein HP_1429</fullName>
    </recommendedName>
</protein>
<reference key="1">
    <citation type="journal article" date="1997" name="Nature">
        <title>The complete genome sequence of the gastric pathogen Helicobacter pylori.</title>
        <authorList>
            <person name="Tomb J.-F."/>
            <person name="White O."/>
            <person name="Kerlavage A.R."/>
            <person name="Clayton R.A."/>
            <person name="Sutton G.G."/>
            <person name="Fleischmann R.D."/>
            <person name="Ketchum K.A."/>
            <person name="Klenk H.-P."/>
            <person name="Gill S.R."/>
            <person name="Dougherty B.A."/>
            <person name="Nelson K.E."/>
            <person name="Quackenbush J."/>
            <person name="Zhou L."/>
            <person name="Kirkness E.F."/>
            <person name="Peterson S.N."/>
            <person name="Loftus B.J."/>
            <person name="Richardson D.L."/>
            <person name="Dodson R.J."/>
            <person name="Khalak H.G."/>
            <person name="Glodek A."/>
            <person name="McKenney K."/>
            <person name="FitzGerald L.M."/>
            <person name="Lee N."/>
            <person name="Adams M.D."/>
            <person name="Hickey E.K."/>
            <person name="Berg D.E."/>
            <person name="Gocayne J.D."/>
            <person name="Utterback T.R."/>
            <person name="Peterson J.D."/>
            <person name="Kelley J.M."/>
            <person name="Cotton M.D."/>
            <person name="Weidman J.F."/>
            <person name="Fujii C."/>
            <person name="Bowman C."/>
            <person name="Watthey L."/>
            <person name="Wallin E."/>
            <person name="Hayes W.S."/>
            <person name="Borodovsky M."/>
            <person name="Karp P.D."/>
            <person name="Smith H.O."/>
            <person name="Fraser C.M."/>
            <person name="Venter J.C."/>
        </authorList>
    </citation>
    <scope>NUCLEOTIDE SEQUENCE [LARGE SCALE GENOMIC DNA]</scope>
    <source>
        <strain>ATCC 700392 / 26695</strain>
    </source>
</reference>